<sequence>MELNPGNPIFDYCVLPCFIFLARVTDVSIGTIRVILLTREKKVIAASLGFLEVLLWVIVITQVIKNLNNALCYLAYAGGFAAGTFIGMILEEKLAIGFSLLRIISPRNGDEIANKLSEAGYGVTTMNGQGSRGPVKIVFTVLKRKKIGQAMTIVKSVEPDVFYSIENARSTNTAVSEDSPGLLRIGILEKILKVRK</sequence>
<protein>
    <recommendedName>
        <fullName evidence="1">UPF0316 protein LBL_2483</fullName>
    </recommendedName>
</protein>
<gene>
    <name type="ordered locus">LBL_2483</name>
</gene>
<organism>
    <name type="scientific">Leptospira borgpetersenii serovar Hardjo-bovis (strain L550)</name>
    <dbReference type="NCBI Taxonomy" id="355276"/>
    <lineage>
        <taxon>Bacteria</taxon>
        <taxon>Pseudomonadati</taxon>
        <taxon>Spirochaetota</taxon>
        <taxon>Spirochaetia</taxon>
        <taxon>Leptospirales</taxon>
        <taxon>Leptospiraceae</taxon>
        <taxon>Leptospira</taxon>
    </lineage>
</organism>
<name>Y2483_LEPBL</name>
<accession>Q04YI7</accession>
<reference key="1">
    <citation type="journal article" date="2006" name="Proc. Natl. Acad. Sci. U.S.A.">
        <title>Genome reduction in Leptospira borgpetersenii reflects limited transmission potential.</title>
        <authorList>
            <person name="Bulach D.M."/>
            <person name="Zuerner R.L."/>
            <person name="Wilson P."/>
            <person name="Seemann T."/>
            <person name="McGrath A."/>
            <person name="Cullen P.A."/>
            <person name="Davis J."/>
            <person name="Johnson M."/>
            <person name="Kuczek E."/>
            <person name="Alt D.P."/>
            <person name="Peterson-Burch B."/>
            <person name="Coppel R.L."/>
            <person name="Rood J.I."/>
            <person name="Davies J.K."/>
            <person name="Adler B."/>
        </authorList>
    </citation>
    <scope>NUCLEOTIDE SEQUENCE [LARGE SCALE GENOMIC DNA]</scope>
    <source>
        <strain>L550</strain>
    </source>
</reference>
<proteinExistence type="inferred from homology"/>
<evidence type="ECO:0000255" key="1">
    <source>
        <dbReference type="HAMAP-Rule" id="MF_01515"/>
    </source>
</evidence>
<keyword id="KW-1003">Cell membrane</keyword>
<keyword id="KW-0472">Membrane</keyword>
<keyword id="KW-0812">Transmembrane</keyword>
<keyword id="KW-1133">Transmembrane helix</keyword>
<comment type="subcellular location">
    <subcellularLocation>
        <location evidence="1">Cell membrane</location>
        <topology evidence="1">Multi-pass membrane protein</topology>
    </subcellularLocation>
</comment>
<comment type="similarity">
    <text evidence="1">Belongs to the UPF0316 family.</text>
</comment>
<feature type="chain" id="PRO_0000292363" description="UPF0316 protein LBL_2483">
    <location>
        <begin position="1"/>
        <end position="196"/>
    </location>
</feature>
<feature type="transmembrane region" description="Helical" evidence="1">
    <location>
        <begin position="12"/>
        <end position="32"/>
    </location>
</feature>
<feature type="transmembrane region" description="Helical" evidence="1">
    <location>
        <begin position="44"/>
        <end position="64"/>
    </location>
</feature>
<feature type="transmembrane region" description="Helical" evidence="1">
    <location>
        <begin position="70"/>
        <end position="90"/>
    </location>
</feature>
<dbReference type="EMBL" id="CP000348">
    <property type="protein sequence ID" value="ABJ79858.1"/>
    <property type="molecule type" value="Genomic_DNA"/>
</dbReference>
<dbReference type="RefSeq" id="WP_002752840.1">
    <property type="nucleotide sequence ID" value="NC_008508.1"/>
</dbReference>
<dbReference type="SMR" id="Q04YI7"/>
<dbReference type="KEGG" id="lbl:LBL_2483"/>
<dbReference type="HOGENOM" id="CLU_106166_0_0_12"/>
<dbReference type="GO" id="GO:0005886">
    <property type="term" value="C:plasma membrane"/>
    <property type="evidence" value="ECO:0007669"/>
    <property type="project" value="UniProtKB-SubCell"/>
</dbReference>
<dbReference type="CDD" id="cd16381">
    <property type="entry name" value="YitT_C_like_1"/>
    <property type="match status" value="1"/>
</dbReference>
<dbReference type="Gene3D" id="3.30.70.120">
    <property type="match status" value="1"/>
</dbReference>
<dbReference type="HAMAP" id="MF_01515">
    <property type="entry name" value="UPF0316"/>
    <property type="match status" value="1"/>
</dbReference>
<dbReference type="InterPro" id="IPR019264">
    <property type="entry name" value="DUF2179"/>
</dbReference>
<dbReference type="InterPro" id="IPR044035">
    <property type="entry name" value="DUF5698"/>
</dbReference>
<dbReference type="InterPro" id="IPR015867">
    <property type="entry name" value="N-reg_PII/ATP_PRibTrfase_C"/>
</dbReference>
<dbReference type="InterPro" id="IPR022930">
    <property type="entry name" value="UPF0316"/>
</dbReference>
<dbReference type="NCBIfam" id="NF003191">
    <property type="entry name" value="PRK04164.1-2"/>
    <property type="match status" value="1"/>
</dbReference>
<dbReference type="PANTHER" id="PTHR40060">
    <property type="entry name" value="UPF0316 PROTEIN YEBE"/>
    <property type="match status" value="1"/>
</dbReference>
<dbReference type="PANTHER" id="PTHR40060:SF1">
    <property type="entry name" value="UPF0316 PROTEIN YEBE"/>
    <property type="match status" value="1"/>
</dbReference>
<dbReference type="Pfam" id="PF10035">
    <property type="entry name" value="DUF2179"/>
    <property type="match status" value="1"/>
</dbReference>
<dbReference type="Pfam" id="PF18955">
    <property type="entry name" value="DUF5698"/>
    <property type="match status" value="1"/>
</dbReference>